<evidence type="ECO:0000255" key="1">
    <source>
        <dbReference type="HAMAP-Rule" id="MF_00274"/>
    </source>
</evidence>
<comment type="function">
    <text evidence="1">Binds to DNA and alters its conformation. May be involved in regulation of gene expression, nucleoid organization and DNA protection.</text>
</comment>
<comment type="subunit">
    <text evidence="1">Homodimer.</text>
</comment>
<comment type="subcellular location">
    <subcellularLocation>
        <location evidence="1">Cytoplasm</location>
        <location evidence="1">Nucleoid</location>
    </subcellularLocation>
</comment>
<comment type="similarity">
    <text evidence="1">Belongs to the YbaB/EbfC family.</text>
</comment>
<gene>
    <name type="ordered locus">BCc_301</name>
</gene>
<keyword id="KW-0963">Cytoplasm</keyword>
<keyword id="KW-0238">DNA-binding</keyword>
<keyword id="KW-1185">Reference proteome</keyword>
<dbReference type="EMBL" id="CP000263">
    <property type="protein sequence ID" value="ABJ90759.1"/>
    <property type="molecule type" value="Genomic_DNA"/>
</dbReference>
<dbReference type="RefSeq" id="WP_011672678.1">
    <property type="nucleotide sequence ID" value="NC_008513.1"/>
</dbReference>
<dbReference type="SMR" id="Q057E0"/>
<dbReference type="STRING" id="372461.BCc_301"/>
<dbReference type="KEGG" id="bcc:BCc_301"/>
<dbReference type="eggNOG" id="COG0718">
    <property type="taxonomic scope" value="Bacteria"/>
</dbReference>
<dbReference type="HOGENOM" id="CLU_140930_0_0_6"/>
<dbReference type="OrthoDB" id="9808738at2"/>
<dbReference type="Proteomes" id="UP000000669">
    <property type="component" value="Chromosome"/>
</dbReference>
<dbReference type="GO" id="GO:0043590">
    <property type="term" value="C:bacterial nucleoid"/>
    <property type="evidence" value="ECO:0007669"/>
    <property type="project" value="UniProtKB-UniRule"/>
</dbReference>
<dbReference type="GO" id="GO:0005829">
    <property type="term" value="C:cytosol"/>
    <property type="evidence" value="ECO:0007669"/>
    <property type="project" value="TreeGrafter"/>
</dbReference>
<dbReference type="GO" id="GO:0003677">
    <property type="term" value="F:DNA binding"/>
    <property type="evidence" value="ECO:0007669"/>
    <property type="project" value="UniProtKB-UniRule"/>
</dbReference>
<dbReference type="Gene3D" id="3.30.1310.10">
    <property type="entry name" value="Nucleoid-associated protein YbaB-like domain"/>
    <property type="match status" value="1"/>
</dbReference>
<dbReference type="HAMAP" id="MF_00274">
    <property type="entry name" value="DNA_YbaB_EbfC"/>
    <property type="match status" value="1"/>
</dbReference>
<dbReference type="InterPro" id="IPR036894">
    <property type="entry name" value="YbaB-like_sf"/>
</dbReference>
<dbReference type="InterPro" id="IPR004401">
    <property type="entry name" value="YbaB/EbfC"/>
</dbReference>
<dbReference type="NCBIfam" id="TIGR00103">
    <property type="entry name" value="DNA_YbaB_EbfC"/>
    <property type="match status" value="1"/>
</dbReference>
<dbReference type="PANTHER" id="PTHR33449">
    <property type="entry name" value="NUCLEOID-ASSOCIATED PROTEIN YBAB"/>
    <property type="match status" value="1"/>
</dbReference>
<dbReference type="PANTHER" id="PTHR33449:SF1">
    <property type="entry name" value="NUCLEOID-ASSOCIATED PROTEIN YBAB"/>
    <property type="match status" value="1"/>
</dbReference>
<dbReference type="Pfam" id="PF02575">
    <property type="entry name" value="YbaB_DNA_bd"/>
    <property type="match status" value="1"/>
</dbReference>
<dbReference type="PIRSF" id="PIRSF004555">
    <property type="entry name" value="UCP004555"/>
    <property type="match status" value="1"/>
</dbReference>
<dbReference type="SUPFAM" id="SSF82607">
    <property type="entry name" value="YbaB-like"/>
    <property type="match status" value="1"/>
</dbReference>
<sequence length="102" mass="11900">MYTKEKINELMEKAQVMKKEMEKIQKDIKMTKIKGESGAGLVTIFMNGNYNCRKTKINDEIWNEKNKILIQDLITSAINNAVNKITELQKKKIILKTPFHNE</sequence>
<protein>
    <recommendedName>
        <fullName evidence="1">Nucleoid-associated protein BCc_301</fullName>
    </recommendedName>
</protein>
<reference key="1">
    <citation type="journal article" date="2006" name="Science">
        <title>A small microbial genome: the end of a long symbiotic relationship?</title>
        <authorList>
            <person name="Perez-Brocal V."/>
            <person name="Gil R."/>
            <person name="Ramos S."/>
            <person name="Lamelas A."/>
            <person name="Postigo M."/>
            <person name="Michelena J.M."/>
            <person name="Silva F.J."/>
            <person name="Moya A."/>
            <person name="Latorre A."/>
        </authorList>
    </citation>
    <scope>NUCLEOTIDE SEQUENCE [LARGE SCALE GENOMIC DNA]</scope>
    <source>
        <strain>Cc</strain>
    </source>
</reference>
<name>Y701_BUCCC</name>
<feature type="chain" id="PRO_1000003698" description="Nucleoid-associated protein BCc_301">
    <location>
        <begin position="1"/>
        <end position="102"/>
    </location>
</feature>
<accession>Q057E0</accession>
<proteinExistence type="inferred from homology"/>
<organism>
    <name type="scientific">Buchnera aphidicola subsp. Cinara cedri (strain Cc)</name>
    <dbReference type="NCBI Taxonomy" id="372461"/>
    <lineage>
        <taxon>Bacteria</taxon>
        <taxon>Pseudomonadati</taxon>
        <taxon>Pseudomonadota</taxon>
        <taxon>Gammaproteobacteria</taxon>
        <taxon>Enterobacterales</taxon>
        <taxon>Erwiniaceae</taxon>
        <taxon>Buchnera</taxon>
    </lineage>
</organism>